<name>Y3818_XANCB</name>
<evidence type="ECO:0000255" key="1">
    <source>
        <dbReference type="HAMAP-Rule" id="MF_00632"/>
    </source>
</evidence>
<gene>
    <name type="ordered locus">xcc-b100_3818</name>
</gene>
<accession>B0RWE6</accession>
<organism>
    <name type="scientific">Xanthomonas campestris pv. campestris (strain B100)</name>
    <dbReference type="NCBI Taxonomy" id="509169"/>
    <lineage>
        <taxon>Bacteria</taxon>
        <taxon>Pseudomonadati</taxon>
        <taxon>Pseudomonadota</taxon>
        <taxon>Gammaproteobacteria</taxon>
        <taxon>Lysobacterales</taxon>
        <taxon>Lysobacteraceae</taxon>
        <taxon>Xanthomonas</taxon>
    </lineage>
</organism>
<keyword id="KW-0547">Nucleotide-binding</keyword>
<protein>
    <recommendedName>
        <fullName evidence="1">Nucleotide-binding protein xcc-b100_3818</fullName>
    </recommendedName>
</protein>
<sequence>MPSFDVISEVDKHELTNAVDQANRELDTRFDFKGVEAKFELEDGKVINQSAPSDFQVKQMTDILRARLLARGIDVRCLEFGDVETNLAGARQKVTVKQGIEQKQAKQLVAKLKEAKLKVEAQINGDKLRVTGKKRDDLQDAIAVLKKADFELPLQFDNFRD</sequence>
<comment type="function">
    <text evidence="1">Nucleotide-binding protein.</text>
</comment>
<comment type="similarity">
    <text evidence="1">Belongs to the YajQ family.</text>
</comment>
<dbReference type="EMBL" id="AM920689">
    <property type="protein sequence ID" value="CAP53185.1"/>
    <property type="molecule type" value="Genomic_DNA"/>
</dbReference>
<dbReference type="SMR" id="B0RWE6"/>
<dbReference type="KEGG" id="xca:xcc-b100_3818"/>
<dbReference type="HOGENOM" id="CLU_099839_1_0_6"/>
<dbReference type="Proteomes" id="UP000001188">
    <property type="component" value="Chromosome"/>
</dbReference>
<dbReference type="GO" id="GO:0005829">
    <property type="term" value="C:cytosol"/>
    <property type="evidence" value="ECO:0007669"/>
    <property type="project" value="TreeGrafter"/>
</dbReference>
<dbReference type="GO" id="GO:0000166">
    <property type="term" value="F:nucleotide binding"/>
    <property type="evidence" value="ECO:0007669"/>
    <property type="project" value="TreeGrafter"/>
</dbReference>
<dbReference type="CDD" id="cd11740">
    <property type="entry name" value="YajQ_like"/>
    <property type="match status" value="1"/>
</dbReference>
<dbReference type="FunFam" id="3.30.70.990:FF:000001">
    <property type="entry name" value="UPF0234 protein YajQ"/>
    <property type="match status" value="1"/>
</dbReference>
<dbReference type="Gene3D" id="3.30.70.860">
    <property type="match status" value="1"/>
</dbReference>
<dbReference type="Gene3D" id="3.30.70.990">
    <property type="entry name" value="YajQ-like, domain 2"/>
    <property type="match status" value="1"/>
</dbReference>
<dbReference type="HAMAP" id="MF_00632">
    <property type="entry name" value="YajQ"/>
    <property type="match status" value="1"/>
</dbReference>
<dbReference type="InterPro" id="IPR007551">
    <property type="entry name" value="DUF520"/>
</dbReference>
<dbReference type="InterPro" id="IPR035571">
    <property type="entry name" value="UPF0234-like_C"/>
</dbReference>
<dbReference type="InterPro" id="IPR035570">
    <property type="entry name" value="UPF0234_N"/>
</dbReference>
<dbReference type="InterPro" id="IPR036183">
    <property type="entry name" value="YajQ-like_sf"/>
</dbReference>
<dbReference type="NCBIfam" id="NF003819">
    <property type="entry name" value="PRK05412.1"/>
    <property type="match status" value="1"/>
</dbReference>
<dbReference type="PANTHER" id="PTHR30476">
    <property type="entry name" value="UPF0234 PROTEIN YAJQ"/>
    <property type="match status" value="1"/>
</dbReference>
<dbReference type="PANTHER" id="PTHR30476:SF0">
    <property type="entry name" value="UPF0234 PROTEIN YAJQ"/>
    <property type="match status" value="1"/>
</dbReference>
<dbReference type="Pfam" id="PF04461">
    <property type="entry name" value="DUF520"/>
    <property type="match status" value="1"/>
</dbReference>
<dbReference type="SUPFAM" id="SSF89963">
    <property type="entry name" value="YajQ-like"/>
    <property type="match status" value="2"/>
</dbReference>
<reference key="1">
    <citation type="journal article" date="2008" name="J. Biotechnol.">
        <title>The genome of Xanthomonas campestris pv. campestris B100 and its use for the reconstruction of metabolic pathways involved in xanthan biosynthesis.</title>
        <authorList>
            <person name="Vorhoelter F.-J."/>
            <person name="Schneiker S."/>
            <person name="Goesmann A."/>
            <person name="Krause L."/>
            <person name="Bekel T."/>
            <person name="Kaiser O."/>
            <person name="Linke B."/>
            <person name="Patschkowski T."/>
            <person name="Rueckert C."/>
            <person name="Schmid J."/>
            <person name="Sidhu V.K."/>
            <person name="Sieber V."/>
            <person name="Tauch A."/>
            <person name="Watt S.A."/>
            <person name="Weisshaar B."/>
            <person name="Becker A."/>
            <person name="Niehaus K."/>
            <person name="Puehler A."/>
        </authorList>
    </citation>
    <scope>NUCLEOTIDE SEQUENCE [LARGE SCALE GENOMIC DNA]</scope>
    <source>
        <strain>B100</strain>
    </source>
</reference>
<proteinExistence type="inferred from homology"/>
<feature type="chain" id="PRO_1000130658" description="Nucleotide-binding protein xcc-b100_3818">
    <location>
        <begin position="1"/>
        <end position="161"/>
    </location>
</feature>